<protein>
    <recommendedName>
        <fullName evidence="1">Alanine racemase</fullName>
        <ecNumber evidence="1">5.1.1.1</ecNumber>
    </recommendedName>
</protein>
<comment type="function">
    <text evidence="1">Catalyzes the interconversion of L-alanine and D-alanine. May also act on other amino acids.</text>
</comment>
<comment type="catalytic activity">
    <reaction evidence="1">
        <text>L-alanine = D-alanine</text>
        <dbReference type="Rhea" id="RHEA:20249"/>
        <dbReference type="ChEBI" id="CHEBI:57416"/>
        <dbReference type="ChEBI" id="CHEBI:57972"/>
        <dbReference type="EC" id="5.1.1.1"/>
    </reaction>
</comment>
<comment type="cofactor">
    <cofactor evidence="1">
        <name>pyridoxal 5'-phosphate</name>
        <dbReference type="ChEBI" id="CHEBI:597326"/>
    </cofactor>
</comment>
<comment type="pathway">
    <text evidence="1">Amino-acid biosynthesis; D-alanine biosynthesis; D-alanine from L-alanine: step 1/1.</text>
</comment>
<comment type="similarity">
    <text evidence="1">Belongs to the alanine racemase family.</text>
</comment>
<reference key="1">
    <citation type="submission" date="2003-03" db="EMBL/GenBank/DDBJ databases">
        <title>The complete genome sequence of Neisseria gonorrhoeae.</title>
        <authorList>
            <person name="Lewis L.A."/>
            <person name="Gillaspy A.F."/>
            <person name="McLaughlin R.E."/>
            <person name="Gipson M."/>
            <person name="Ducey T.F."/>
            <person name="Ownbey T."/>
            <person name="Hartman K."/>
            <person name="Nydick C."/>
            <person name="Carson M.B."/>
            <person name="Vaughn J."/>
            <person name="Thomson C."/>
            <person name="Song L."/>
            <person name="Lin S."/>
            <person name="Yuan X."/>
            <person name="Najar F."/>
            <person name="Zhan M."/>
            <person name="Ren Q."/>
            <person name="Zhu H."/>
            <person name="Qi S."/>
            <person name="Kenton S.M."/>
            <person name="Lai H."/>
            <person name="White J.D."/>
            <person name="Clifton S."/>
            <person name="Roe B.A."/>
            <person name="Dyer D.W."/>
        </authorList>
    </citation>
    <scope>NUCLEOTIDE SEQUENCE [LARGE SCALE GENOMIC DNA]</scope>
    <source>
        <strain>ATCC 700825 / FA 1090</strain>
    </source>
</reference>
<gene>
    <name type="primary">alr</name>
    <name type="ordered locus">NGO_1295</name>
</gene>
<proteinExistence type="inferred from homology"/>
<evidence type="ECO:0000255" key="1">
    <source>
        <dbReference type="HAMAP-Rule" id="MF_01201"/>
    </source>
</evidence>
<keyword id="KW-0413">Isomerase</keyword>
<keyword id="KW-0663">Pyridoxal phosphate</keyword>
<keyword id="KW-1185">Reference proteome</keyword>
<dbReference type="EC" id="5.1.1.1" evidence="1"/>
<dbReference type="EMBL" id="AE004969">
    <property type="protein sequence ID" value="AAW89949.1"/>
    <property type="molecule type" value="Genomic_DNA"/>
</dbReference>
<dbReference type="RefSeq" id="WP_010951235.1">
    <property type="nucleotide sequence ID" value="NC_002946.2"/>
</dbReference>
<dbReference type="RefSeq" id="YP_208361.1">
    <property type="nucleotide sequence ID" value="NC_002946.2"/>
</dbReference>
<dbReference type="SMR" id="Q5F788"/>
<dbReference type="STRING" id="242231.NGO_1295"/>
<dbReference type="KEGG" id="ngo:NGO_1295"/>
<dbReference type="PATRIC" id="fig|242231.10.peg.1522"/>
<dbReference type="HOGENOM" id="CLU_028393_1_0_4"/>
<dbReference type="UniPathway" id="UPA00042">
    <property type="reaction ID" value="UER00497"/>
</dbReference>
<dbReference type="Proteomes" id="UP000000535">
    <property type="component" value="Chromosome"/>
</dbReference>
<dbReference type="GO" id="GO:0005829">
    <property type="term" value="C:cytosol"/>
    <property type="evidence" value="ECO:0007669"/>
    <property type="project" value="TreeGrafter"/>
</dbReference>
<dbReference type="GO" id="GO:0008784">
    <property type="term" value="F:alanine racemase activity"/>
    <property type="evidence" value="ECO:0007669"/>
    <property type="project" value="UniProtKB-UniRule"/>
</dbReference>
<dbReference type="GO" id="GO:0030170">
    <property type="term" value="F:pyridoxal phosphate binding"/>
    <property type="evidence" value="ECO:0007669"/>
    <property type="project" value="UniProtKB-UniRule"/>
</dbReference>
<dbReference type="GO" id="GO:0030632">
    <property type="term" value="P:D-alanine biosynthetic process"/>
    <property type="evidence" value="ECO:0007669"/>
    <property type="project" value="UniProtKB-UniRule"/>
</dbReference>
<dbReference type="CDD" id="cd06827">
    <property type="entry name" value="PLPDE_III_AR_proteobact"/>
    <property type="match status" value="1"/>
</dbReference>
<dbReference type="FunFam" id="3.20.20.10:FF:000002">
    <property type="entry name" value="Alanine racemase"/>
    <property type="match status" value="1"/>
</dbReference>
<dbReference type="Gene3D" id="3.20.20.10">
    <property type="entry name" value="Alanine racemase"/>
    <property type="match status" value="1"/>
</dbReference>
<dbReference type="Gene3D" id="2.40.37.10">
    <property type="entry name" value="Lyase, Ornithine Decarboxylase, Chain A, domain 1"/>
    <property type="match status" value="1"/>
</dbReference>
<dbReference type="HAMAP" id="MF_01201">
    <property type="entry name" value="Ala_racemase"/>
    <property type="match status" value="1"/>
</dbReference>
<dbReference type="InterPro" id="IPR000821">
    <property type="entry name" value="Ala_racemase"/>
</dbReference>
<dbReference type="InterPro" id="IPR009006">
    <property type="entry name" value="Ala_racemase/Decarboxylase_C"/>
</dbReference>
<dbReference type="InterPro" id="IPR011079">
    <property type="entry name" value="Ala_racemase_C"/>
</dbReference>
<dbReference type="InterPro" id="IPR001608">
    <property type="entry name" value="Ala_racemase_N"/>
</dbReference>
<dbReference type="InterPro" id="IPR020622">
    <property type="entry name" value="Ala_racemase_pyridoxalP-BS"/>
</dbReference>
<dbReference type="InterPro" id="IPR029066">
    <property type="entry name" value="PLP-binding_barrel"/>
</dbReference>
<dbReference type="NCBIfam" id="TIGR00492">
    <property type="entry name" value="alr"/>
    <property type="match status" value="1"/>
</dbReference>
<dbReference type="PANTHER" id="PTHR30511">
    <property type="entry name" value="ALANINE RACEMASE"/>
    <property type="match status" value="1"/>
</dbReference>
<dbReference type="PANTHER" id="PTHR30511:SF0">
    <property type="entry name" value="ALANINE RACEMASE, CATABOLIC-RELATED"/>
    <property type="match status" value="1"/>
</dbReference>
<dbReference type="Pfam" id="PF00842">
    <property type="entry name" value="Ala_racemase_C"/>
    <property type="match status" value="1"/>
</dbReference>
<dbReference type="Pfam" id="PF01168">
    <property type="entry name" value="Ala_racemase_N"/>
    <property type="match status" value="1"/>
</dbReference>
<dbReference type="PRINTS" id="PR00992">
    <property type="entry name" value="ALARACEMASE"/>
</dbReference>
<dbReference type="SMART" id="SM01005">
    <property type="entry name" value="Ala_racemase_C"/>
    <property type="match status" value="1"/>
</dbReference>
<dbReference type="SUPFAM" id="SSF50621">
    <property type="entry name" value="Alanine racemase C-terminal domain-like"/>
    <property type="match status" value="1"/>
</dbReference>
<dbReference type="SUPFAM" id="SSF51419">
    <property type="entry name" value="PLP-binding barrel"/>
    <property type="match status" value="1"/>
</dbReference>
<dbReference type="PROSITE" id="PS00395">
    <property type="entry name" value="ALANINE_RACEMASE"/>
    <property type="match status" value="1"/>
</dbReference>
<feature type="chain" id="PRO_1000066015" description="Alanine racemase">
    <location>
        <begin position="1"/>
        <end position="352"/>
    </location>
</feature>
<feature type="active site" description="Proton acceptor; specific for D-alanine" evidence="1">
    <location>
        <position position="33"/>
    </location>
</feature>
<feature type="active site" description="Proton acceptor; specific for L-alanine" evidence="1">
    <location>
        <position position="250"/>
    </location>
</feature>
<feature type="binding site" evidence="1">
    <location>
        <position position="129"/>
    </location>
    <ligand>
        <name>substrate</name>
    </ligand>
</feature>
<feature type="binding site" evidence="1">
    <location>
        <position position="298"/>
    </location>
    <ligand>
        <name>substrate</name>
    </ligand>
</feature>
<feature type="modified residue" description="N6-(pyridoxal phosphate)lysine" evidence="1">
    <location>
        <position position="33"/>
    </location>
</feature>
<name>ALR_NEIG1</name>
<organism>
    <name type="scientific">Neisseria gonorrhoeae (strain ATCC 700825 / FA 1090)</name>
    <dbReference type="NCBI Taxonomy" id="242231"/>
    <lineage>
        <taxon>Bacteria</taxon>
        <taxon>Pseudomonadati</taxon>
        <taxon>Pseudomonadota</taxon>
        <taxon>Betaproteobacteria</taxon>
        <taxon>Neisseriales</taxon>
        <taxon>Neisseriaceae</taxon>
        <taxon>Neisseria</taxon>
    </lineage>
</organism>
<accession>Q5F788</accession>
<sequence length="352" mass="38877">MRPLNVQIRLGNLRHNYRILKEMHGGKLLAVVKADAYGHGAVRCAFALADLADGFAVATIDEGIRLRESGITHPIVLLEGVFEASEYEAVEQYSLWPAVGNQWQLEALLSRHWKKPVKVWLKMDSGMHRTGFFPHDYTSAYAALKQSEYVDSIVKFSHFSCADEPESGMTEIQMEAFDLGTKGLEGEESLANSAAILNIPEARRDWGRAGLALYGISPFGGSDDRLKPVMRLSTRIFGERVLQPHSPIGYGATFYTSKSTRVGLIACGYADGYPRRAPSNSPVAVDGKLTRVIGRISMDMMTIELDASQEGLGHEVELWGDTVNINTVAEAAGTIPYELMCNIKRAKFTYIE</sequence>